<comment type="function">
    <text evidence="1">Required for rescue of stalled ribosomes mediated by trans-translation. Binds to transfer-messenger RNA (tmRNA), required for stable association of tmRNA with ribosomes. tmRNA and SmpB together mimic tRNA shape, replacing the anticodon stem-loop with SmpB. tmRNA is encoded by the ssrA gene; the 2 termini fold to resemble tRNA(Ala) and it encodes a 'tag peptide', a short internal open reading frame. During trans-translation Ala-aminoacylated tmRNA acts like a tRNA, entering the A-site of stalled ribosomes, displacing the stalled mRNA. The ribosome then switches to translate the ORF on the tmRNA; the nascent peptide is terminated with the 'tag peptide' encoded by the tmRNA and targeted for degradation. The ribosome is freed to recommence translation, which seems to be the essential function of trans-translation.</text>
</comment>
<comment type="subcellular location">
    <subcellularLocation>
        <location evidence="1">Cytoplasm</location>
    </subcellularLocation>
    <text evidence="1">The tmRNA-SmpB complex associates with stalled 70S ribosomes.</text>
</comment>
<comment type="similarity">
    <text evidence="1">Belongs to the SmpB family.</text>
</comment>
<dbReference type="EMBL" id="BX640445">
    <property type="protein sequence ID" value="CAE33120.1"/>
    <property type="molecule type" value="Genomic_DNA"/>
</dbReference>
<dbReference type="RefSeq" id="WP_003811754.1">
    <property type="nucleotide sequence ID" value="NC_002927.3"/>
</dbReference>
<dbReference type="SMR" id="Q7WJ73"/>
<dbReference type="GeneID" id="69601353"/>
<dbReference type="KEGG" id="bbr:BB2627"/>
<dbReference type="eggNOG" id="COG0691">
    <property type="taxonomic scope" value="Bacteria"/>
</dbReference>
<dbReference type="HOGENOM" id="CLU_108953_3_0_4"/>
<dbReference type="Proteomes" id="UP000001027">
    <property type="component" value="Chromosome"/>
</dbReference>
<dbReference type="GO" id="GO:0005829">
    <property type="term" value="C:cytosol"/>
    <property type="evidence" value="ECO:0007669"/>
    <property type="project" value="TreeGrafter"/>
</dbReference>
<dbReference type="GO" id="GO:0003723">
    <property type="term" value="F:RNA binding"/>
    <property type="evidence" value="ECO:0007669"/>
    <property type="project" value="UniProtKB-UniRule"/>
</dbReference>
<dbReference type="GO" id="GO:0070929">
    <property type="term" value="P:trans-translation"/>
    <property type="evidence" value="ECO:0007669"/>
    <property type="project" value="UniProtKB-UniRule"/>
</dbReference>
<dbReference type="CDD" id="cd09294">
    <property type="entry name" value="SmpB"/>
    <property type="match status" value="1"/>
</dbReference>
<dbReference type="Gene3D" id="2.40.280.10">
    <property type="match status" value="1"/>
</dbReference>
<dbReference type="HAMAP" id="MF_00023">
    <property type="entry name" value="SmpB"/>
    <property type="match status" value="1"/>
</dbReference>
<dbReference type="InterPro" id="IPR023620">
    <property type="entry name" value="SmpB"/>
</dbReference>
<dbReference type="InterPro" id="IPR000037">
    <property type="entry name" value="SsrA-bd_prot"/>
</dbReference>
<dbReference type="InterPro" id="IPR020081">
    <property type="entry name" value="SsrA-bd_prot_CS"/>
</dbReference>
<dbReference type="NCBIfam" id="NF003843">
    <property type="entry name" value="PRK05422.1"/>
    <property type="match status" value="1"/>
</dbReference>
<dbReference type="NCBIfam" id="TIGR00086">
    <property type="entry name" value="smpB"/>
    <property type="match status" value="1"/>
</dbReference>
<dbReference type="PANTHER" id="PTHR30308:SF2">
    <property type="entry name" value="SSRA-BINDING PROTEIN"/>
    <property type="match status" value="1"/>
</dbReference>
<dbReference type="PANTHER" id="PTHR30308">
    <property type="entry name" value="TMRNA-BINDING COMPONENT OF TRANS-TRANSLATION TAGGING COMPLEX"/>
    <property type="match status" value="1"/>
</dbReference>
<dbReference type="Pfam" id="PF01668">
    <property type="entry name" value="SmpB"/>
    <property type="match status" value="1"/>
</dbReference>
<dbReference type="SUPFAM" id="SSF74982">
    <property type="entry name" value="Small protein B (SmpB)"/>
    <property type="match status" value="1"/>
</dbReference>
<dbReference type="PROSITE" id="PS01317">
    <property type="entry name" value="SSRP"/>
    <property type="match status" value="1"/>
</dbReference>
<feature type="chain" id="PRO_0000102912" description="SsrA-binding protein">
    <location>
        <begin position="1"/>
        <end position="155"/>
    </location>
</feature>
<proteinExistence type="inferred from homology"/>
<name>SSRP_BORBR</name>
<protein>
    <recommendedName>
        <fullName evidence="1">SsrA-binding protein</fullName>
    </recommendedName>
    <alternativeName>
        <fullName evidence="1">Small protein B</fullName>
    </alternativeName>
</protein>
<organism>
    <name type="scientific">Bordetella bronchiseptica (strain ATCC BAA-588 / NCTC 13252 / RB50)</name>
    <name type="common">Alcaligenes bronchisepticus</name>
    <dbReference type="NCBI Taxonomy" id="257310"/>
    <lineage>
        <taxon>Bacteria</taxon>
        <taxon>Pseudomonadati</taxon>
        <taxon>Pseudomonadota</taxon>
        <taxon>Betaproteobacteria</taxon>
        <taxon>Burkholderiales</taxon>
        <taxon>Alcaligenaceae</taxon>
        <taxon>Bordetella</taxon>
    </lineage>
</organism>
<sequence length="155" mass="18245">MSIIDNRKATHDYFIEDRYEAGMVLEGWEVKAIRDGRVQLKESYVIVRDGEIYLLGMHVSPLPTASTHIRPDATRTRKLLLKAEEIRKLIGKVEQRGYTLVPLNLHYKNGRIKLDFALGRGKKLYDKRDTAREKDWQREKERVLKHDTRVNQRDS</sequence>
<accession>Q7WJ73</accession>
<keyword id="KW-0963">Cytoplasm</keyword>
<keyword id="KW-0694">RNA-binding</keyword>
<gene>
    <name evidence="1" type="primary">smpB</name>
    <name type="ordered locus">BB2627</name>
</gene>
<evidence type="ECO:0000255" key="1">
    <source>
        <dbReference type="HAMAP-Rule" id="MF_00023"/>
    </source>
</evidence>
<reference key="1">
    <citation type="journal article" date="2003" name="Nat. Genet.">
        <title>Comparative analysis of the genome sequences of Bordetella pertussis, Bordetella parapertussis and Bordetella bronchiseptica.</title>
        <authorList>
            <person name="Parkhill J."/>
            <person name="Sebaihia M."/>
            <person name="Preston A."/>
            <person name="Murphy L.D."/>
            <person name="Thomson N.R."/>
            <person name="Harris D.E."/>
            <person name="Holden M.T.G."/>
            <person name="Churcher C.M."/>
            <person name="Bentley S.D."/>
            <person name="Mungall K.L."/>
            <person name="Cerdeno-Tarraga A.-M."/>
            <person name="Temple L."/>
            <person name="James K.D."/>
            <person name="Harris B."/>
            <person name="Quail M.A."/>
            <person name="Achtman M."/>
            <person name="Atkin R."/>
            <person name="Baker S."/>
            <person name="Basham D."/>
            <person name="Bason N."/>
            <person name="Cherevach I."/>
            <person name="Chillingworth T."/>
            <person name="Collins M."/>
            <person name="Cronin A."/>
            <person name="Davis P."/>
            <person name="Doggett J."/>
            <person name="Feltwell T."/>
            <person name="Goble A."/>
            <person name="Hamlin N."/>
            <person name="Hauser H."/>
            <person name="Holroyd S."/>
            <person name="Jagels K."/>
            <person name="Leather S."/>
            <person name="Moule S."/>
            <person name="Norberczak H."/>
            <person name="O'Neil S."/>
            <person name="Ormond D."/>
            <person name="Price C."/>
            <person name="Rabbinowitsch E."/>
            <person name="Rutter S."/>
            <person name="Sanders M."/>
            <person name="Saunders D."/>
            <person name="Seeger K."/>
            <person name="Sharp S."/>
            <person name="Simmonds M."/>
            <person name="Skelton J."/>
            <person name="Squares R."/>
            <person name="Squares S."/>
            <person name="Stevens K."/>
            <person name="Unwin L."/>
            <person name="Whitehead S."/>
            <person name="Barrell B.G."/>
            <person name="Maskell D.J."/>
        </authorList>
    </citation>
    <scope>NUCLEOTIDE SEQUENCE [LARGE SCALE GENOMIC DNA]</scope>
    <source>
        <strain>ATCC BAA-588 / NCTC 13252 / RB50</strain>
    </source>
</reference>